<dbReference type="EMBL" id="CP001100">
    <property type="protein sequence ID" value="ACF12526.1"/>
    <property type="molecule type" value="Genomic_DNA"/>
</dbReference>
<dbReference type="RefSeq" id="WP_012498610.1">
    <property type="nucleotide sequence ID" value="NC_011026.1"/>
</dbReference>
<dbReference type="SMR" id="B3QSD5"/>
<dbReference type="STRING" id="517418.Ctha_0055"/>
<dbReference type="KEGG" id="cts:Ctha_0055"/>
<dbReference type="eggNOG" id="COG0468">
    <property type="taxonomic scope" value="Bacteria"/>
</dbReference>
<dbReference type="HOGENOM" id="CLU_040469_1_2_10"/>
<dbReference type="OrthoDB" id="9776733at2"/>
<dbReference type="Proteomes" id="UP000001208">
    <property type="component" value="Chromosome"/>
</dbReference>
<dbReference type="GO" id="GO:0005829">
    <property type="term" value="C:cytosol"/>
    <property type="evidence" value="ECO:0007669"/>
    <property type="project" value="TreeGrafter"/>
</dbReference>
<dbReference type="GO" id="GO:0005524">
    <property type="term" value="F:ATP binding"/>
    <property type="evidence" value="ECO:0007669"/>
    <property type="project" value="UniProtKB-UniRule"/>
</dbReference>
<dbReference type="GO" id="GO:0016887">
    <property type="term" value="F:ATP hydrolysis activity"/>
    <property type="evidence" value="ECO:0007669"/>
    <property type="project" value="InterPro"/>
</dbReference>
<dbReference type="GO" id="GO:0140664">
    <property type="term" value="F:ATP-dependent DNA damage sensor activity"/>
    <property type="evidence" value="ECO:0007669"/>
    <property type="project" value="InterPro"/>
</dbReference>
<dbReference type="GO" id="GO:0003684">
    <property type="term" value="F:damaged DNA binding"/>
    <property type="evidence" value="ECO:0007669"/>
    <property type="project" value="UniProtKB-UniRule"/>
</dbReference>
<dbReference type="GO" id="GO:0003697">
    <property type="term" value="F:single-stranded DNA binding"/>
    <property type="evidence" value="ECO:0007669"/>
    <property type="project" value="UniProtKB-UniRule"/>
</dbReference>
<dbReference type="GO" id="GO:0006310">
    <property type="term" value="P:DNA recombination"/>
    <property type="evidence" value="ECO:0007669"/>
    <property type="project" value="UniProtKB-UniRule"/>
</dbReference>
<dbReference type="GO" id="GO:0006281">
    <property type="term" value="P:DNA repair"/>
    <property type="evidence" value="ECO:0007669"/>
    <property type="project" value="UniProtKB-UniRule"/>
</dbReference>
<dbReference type="GO" id="GO:0009432">
    <property type="term" value="P:SOS response"/>
    <property type="evidence" value="ECO:0007669"/>
    <property type="project" value="UniProtKB-UniRule"/>
</dbReference>
<dbReference type="CDD" id="cd00983">
    <property type="entry name" value="RecA"/>
    <property type="match status" value="1"/>
</dbReference>
<dbReference type="FunFam" id="3.40.50.300:FF:000087">
    <property type="entry name" value="Recombinase RecA"/>
    <property type="match status" value="1"/>
</dbReference>
<dbReference type="Gene3D" id="3.40.50.300">
    <property type="entry name" value="P-loop containing nucleotide triphosphate hydrolases"/>
    <property type="match status" value="1"/>
</dbReference>
<dbReference type="HAMAP" id="MF_00268">
    <property type="entry name" value="RecA"/>
    <property type="match status" value="1"/>
</dbReference>
<dbReference type="InterPro" id="IPR003593">
    <property type="entry name" value="AAA+_ATPase"/>
</dbReference>
<dbReference type="InterPro" id="IPR013765">
    <property type="entry name" value="DNA_recomb/repair_RecA"/>
</dbReference>
<dbReference type="InterPro" id="IPR020584">
    <property type="entry name" value="DNA_recomb/repair_RecA_CS"/>
</dbReference>
<dbReference type="InterPro" id="IPR027417">
    <property type="entry name" value="P-loop_NTPase"/>
</dbReference>
<dbReference type="InterPro" id="IPR049261">
    <property type="entry name" value="RecA-like_C"/>
</dbReference>
<dbReference type="InterPro" id="IPR049428">
    <property type="entry name" value="RecA-like_N"/>
</dbReference>
<dbReference type="InterPro" id="IPR020588">
    <property type="entry name" value="RecA_ATP-bd"/>
</dbReference>
<dbReference type="InterPro" id="IPR023400">
    <property type="entry name" value="RecA_C_sf"/>
</dbReference>
<dbReference type="InterPro" id="IPR020587">
    <property type="entry name" value="RecA_monomer-monomer_interface"/>
</dbReference>
<dbReference type="NCBIfam" id="TIGR02012">
    <property type="entry name" value="tigrfam_recA"/>
    <property type="match status" value="1"/>
</dbReference>
<dbReference type="PANTHER" id="PTHR45900:SF1">
    <property type="entry name" value="MITOCHONDRIAL DNA REPAIR PROTEIN RECA HOMOLOG-RELATED"/>
    <property type="match status" value="1"/>
</dbReference>
<dbReference type="PANTHER" id="PTHR45900">
    <property type="entry name" value="RECA"/>
    <property type="match status" value="1"/>
</dbReference>
<dbReference type="Pfam" id="PF00154">
    <property type="entry name" value="RecA"/>
    <property type="match status" value="1"/>
</dbReference>
<dbReference type="Pfam" id="PF21096">
    <property type="entry name" value="RecA_C"/>
    <property type="match status" value="1"/>
</dbReference>
<dbReference type="PRINTS" id="PR00142">
    <property type="entry name" value="RECA"/>
</dbReference>
<dbReference type="SMART" id="SM00382">
    <property type="entry name" value="AAA"/>
    <property type="match status" value="1"/>
</dbReference>
<dbReference type="SUPFAM" id="SSF52540">
    <property type="entry name" value="P-loop containing nucleoside triphosphate hydrolases"/>
    <property type="match status" value="1"/>
</dbReference>
<dbReference type="SUPFAM" id="SSF54752">
    <property type="entry name" value="RecA protein, C-terminal domain"/>
    <property type="match status" value="1"/>
</dbReference>
<dbReference type="PROSITE" id="PS00321">
    <property type="entry name" value="RECA_1"/>
    <property type="match status" value="1"/>
</dbReference>
<dbReference type="PROSITE" id="PS50162">
    <property type="entry name" value="RECA_2"/>
    <property type="match status" value="1"/>
</dbReference>
<dbReference type="PROSITE" id="PS50163">
    <property type="entry name" value="RECA_3"/>
    <property type="match status" value="1"/>
</dbReference>
<accession>B3QSD5</accession>
<organism>
    <name type="scientific">Chloroherpeton thalassium (strain ATCC 35110 / GB-78)</name>
    <dbReference type="NCBI Taxonomy" id="517418"/>
    <lineage>
        <taxon>Bacteria</taxon>
        <taxon>Pseudomonadati</taxon>
        <taxon>Chlorobiota</taxon>
        <taxon>Chlorobiia</taxon>
        <taxon>Chlorobiales</taxon>
        <taxon>Chloroherpetonaceae</taxon>
        <taxon>Chloroherpeton</taxon>
    </lineage>
</organism>
<name>RECA_CHLT3</name>
<reference key="1">
    <citation type="submission" date="2008-06" db="EMBL/GenBank/DDBJ databases">
        <title>Complete sequence of Chloroherpeton thalassium ATCC 35110.</title>
        <authorList>
            <consortium name="US DOE Joint Genome Institute"/>
            <person name="Lucas S."/>
            <person name="Copeland A."/>
            <person name="Lapidus A."/>
            <person name="Glavina del Rio T."/>
            <person name="Dalin E."/>
            <person name="Tice H."/>
            <person name="Bruce D."/>
            <person name="Goodwin L."/>
            <person name="Pitluck S."/>
            <person name="Schmutz J."/>
            <person name="Larimer F."/>
            <person name="Land M."/>
            <person name="Hauser L."/>
            <person name="Kyrpides N."/>
            <person name="Mikhailova N."/>
            <person name="Liu Z."/>
            <person name="Li T."/>
            <person name="Zhao F."/>
            <person name="Overmann J."/>
            <person name="Bryant D.A."/>
            <person name="Richardson P."/>
        </authorList>
    </citation>
    <scope>NUCLEOTIDE SEQUENCE [LARGE SCALE GENOMIC DNA]</scope>
    <source>
        <strain>ATCC 35110 / GB-78</strain>
    </source>
</reference>
<evidence type="ECO:0000255" key="1">
    <source>
        <dbReference type="HAMAP-Rule" id="MF_00268"/>
    </source>
</evidence>
<sequence length="357" mass="38265">MAKEKASSQEQEQKVKDEKLKQLNLAVESLEKQFGKGAIMRLGDDAVVQVPVVSTGSISLDYALGVGGLPKGRIVEIYGPESSGKTTLALHAIAEAQKAGGIAAFVDAEHAFDQSYARKLGIDIKSLLISQPESGEQALSITETLVRSGAVDIIVVDSVAALVPQAELEGEMGDSQMGLQARLMSQALRKLTGAISKSNCVAIFINQLRDKIGVMYGSPETTTGGKALKFYASVRLDIRKIAQIKDGTEIVGNRTKVKVVKNKVAPPFKTVEFDIIYGEGVSRIGELIDLAVELGIVKKAGAWFSYENDKLGQGRETVKTLLKADEALFNKIYAQVKEQMVGLKLEGSSDDDSSSDS</sequence>
<comment type="function">
    <text evidence="1">Can catalyze the hydrolysis of ATP in the presence of single-stranded DNA, the ATP-dependent uptake of single-stranded DNA by duplex DNA, and the ATP-dependent hybridization of homologous single-stranded DNAs. It interacts with LexA causing its activation and leading to its autocatalytic cleavage.</text>
</comment>
<comment type="subcellular location">
    <subcellularLocation>
        <location evidence="1">Cytoplasm</location>
    </subcellularLocation>
</comment>
<comment type="similarity">
    <text evidence="1">Belongs to the RecA family.</text>
</comment>
<feature type="chain" id="PRO_1000114323" description="Protein RecA">
    <location>
        <begin position="1"/>
        <end position="357"/>
    </location>
</feature>
<feature type="binding site" evidence="1">
    <location>
        <begin position="79"/>
        <end position="86"/>
    </location>
    <ligand>
        <name>ATP</name>
        <dbReference type="ChEBI" id="CHEBI:30616"/>
    </ligand>
</feature>
<protein>
    <recommendedName>
        <fullName evidence="1">Protein RecA</fullName>
    </recommendedName>
    <alternativeName>
        <fullName evidence="1">Recombinase A</fullName>
    </alternativeName>
</protein>
<proteinExistence type="inferred from homology"/>
<keyword id="KW-0067">ATP-binding</keyword>
<keyword id="KW-0963">Cytoplasm</keyword>
<keyword id="KW-0227">DNA damage</keyword>
<keyword id="KW-0233">DNA recombination</keyword>
<keyword id="KW-0234">DNA repair</keyword>
<keyword id="KW-0238">DNA-binding</keyword>
<keyword id="KW-0547">Nucleotide-binding</keyword>
<keyword id="KW-1185">Reference proteome</keyword>
<keyword id="KW-0742">SOS response</keyword>
<gene>
    <name evidence="1" type="primary">recA</name>
    <name type="ordered locus">Ctha_0055</name>
</gene>